<evidence type="ECO:0000255" key="1">
    <source>
        <dbReference type="HAMAP-Rule" id="MF_00225"/>
    </source>
</evidence>
<dbReference type="EC" id="1.3.5.2" evidence="1"/>
<dbReference type="EMBL" id="CU928158">
    <property type="protein sequence ID" value="CAQ88611.1"/>
    <property type="molecule type" value="Genomic_DNA"/>
</dbReference>
<dbReference type="RefSeq" id="WP_002431618.1">
    <property type="nucleotide sequence ID" value="NC_011740.1"/>
</dbReference>
<dbReference type="SMR" id="B7LNV5"/>
<dbReference type="GeneID" id="75057867"/>
<dbReference type="KEGG" id="efe:EFER_1082"/>
<dbReference type="HOGENOM" id="CLU_013640_2_0_6"/>
<dbReference type="OrthoDB" id="9802377at2"/>
<dbReference type="UniPathway" id="UPA00070">
    <property type="reaction ID" value="UER00946"/>
</dbReference>
<dbReference type="Proteomes" id="UP000000745">
    <property type="component" value="Chromosome"/>
</dbReference>
<dbReference type="GO" id="GO:0005737">
    <property type="term" value="C:cytoplasm"/>
    <property type="evidence" value="ECO:0007669"/>
    <property type="project" value="InterPro"/>
</dbReference>
<dbReference type="GO" id="GO:0005886">
    <property type="term" value="C:plasma membrane"/>
    <property type="evidence" value="ECO:0007669"/>
    <property type="project" value="UniProtKB-SubCell"/>
</dbReference>
<dbReference type="GO" id="GO:0106430">
    <property type="term" value="F:dihydroorotate dehydrogenase (quinone) activity"/>
    <property type="evidence" value="ECO:0007669"/>
    <property type="project" value="UniProtKB-EC"/>
</dbReference>
<dbReference type="GO" id="GO:0006207">
    <property type="term" value="P:'de novo' pyrimidine nucleobase biosynthetic process"/>
    <property type="evidence" value="ECO:0007669"/>
    <property type="project" value="InterPro"/>
</dbReference>
<dbReference type="GO" id="GO:0044205">
    <property type="term" value="P:'de novo' UMP biosynthetic process"/>
    <property type="evidence" value="ECO:0007669"/>
    <property type="project" value="UniProtKB-UniRule"/>
</dbReference>
<dbReference type="CDD" id="cd04738">
    <property type="entry name" value="DHOD_2_like"/>
    <property type="match status" value="1"/>
</dbReference>
<dbReference type="FunFam" id="3.20.20.70:FF:000028">
    <property type="entry name" value="Dihydroorotate dehydrogenase (quinone)"/>
    <property type="match status" value="1"/>
</dbReference>
<dbReference type="Gene3D" id="3.20.20.70">
    <property type="entry name" value="Aldolase class I"/>
    <property type="match status" value="1"/>
</dbReference>
<dbReference type="HAMAP" id="MF_00225">
    <property type="entry name" value="DHO_dh_type2"/>
    <property type="match status" value="1"/>
</dbReference>
<dbReference type="InterPro" id="IPR013785">
    <property type="entry name" value="Aldolase_TIM"/>
</dbReference>
<dbReference type="InterPro" id="IPR050074">
    <property type="entry name" value="DHO_dehydrogenase"/>
</dbReference>
<dbReference type="InterPro" id="IPR012135">
    <property type="entry name" value="Dihydroorotate_DH_1_2"/>
</dbReference>
<dbReference type="InterPro" id="IPR005719">
    <property type="entry name" value="Dihydroorotate_DH_2"/>
</dbReference>
<dbReference type="InterPro" id="IPR005720">
    <property type="entry name" value="Dihydroorotate_DH_cat"/>
</dbReference>
<dbReference type="InterPro" id="IPR001295">
    <property type="entry name" value="Dihydroorotate_DH_CS"/>
</dbReference>
<dbReference type="NCBIfam" id="NF003644">
    <property type="entry name" value="PRK05286.1-1"/>
    <property type="match status" value="1"/>
</dbReference>
<dbReference type="NCBIfam" id="NF003645">
    <property type="entry name" value="PRK05286.1-2"/>
    <property type="match status" value="1"/>
</dbReference>
<dbReference type="NCBIfam" id="NF003646">
    <property type="entry name" value="PRK05286.1-4"/>
    <property type="match status" value="1"/>
</dbReference>
<dbReference type="NCBIfam" id="NF003652">
    <property type="entry name" value="PRK05286.2-5"/>
    <property type="match status" value="1"/>
</dbReference>
<dbReference type="NCBIfam" id="TIGR01036">
    <property type="entry name" value="pyrD_sub2"/>
    <property type="match status" value="1"/>
</dbReference>
<dbReference type="PANTHER" id="PTHR48109:SF4">
    <property type="entry name" value="DIHYDROOROTATE DEHYDROGENASE (QUINONE), MITOCHONDRIAL"/>
    <property type="match status" value="1"/>
</dbReference>
<dbReference type="PANTHER" id="PTHR48109">
    <property type="entry name" value="DIHYDROOROTATE DEHYDROGENASE (QUINONE), MITOCHONDRIAL-RELATED"/>
    <property type="match status" value="1"/>
</dbReference>
<dbReference type="Pfam" id="PF01180">
    <property type="entry name" value="DHO_dh"/>
    <property type="match status" value="1"/>
</dbReference>
<dbReference type="PIRSF" id="PIRSF000164">
    <property type="entry name" value="DHO_oxidase"/>
    <property type="match status" value="1"/>
</dbReference>
<dbReference type="SUPFAM" id="SSF51395">
    <property type="entry name" value="FMN-linked oxidoreductases"/>
    <property type="match status" value="1"/>
</dbReference>
<dbReference type="PROSITE" id="PS00911">
    <property type="entry name" value="DHODEHASE_1"/>
    <property type="match status" value="1"/>
</dbReference>
<dbReference type="PROSITE" id="PS00912">
    <property type="entry name" value="DHODEHASE_2"/>
    <property type="match status" value="1"/>
</dbReference>
<feature type="chain" id="PRO_1000195077" description="Dihydroorotate dehydrogenase (quinone)">
    <location>
        <begin position="1"/>
        <end position="336"/>
    </location>
</feature>
<feature type="active site" description="Nucleophile" evidence="1">
    <location>
        <position position="175"/>
    </location>
</feature>
<feature type="binding site" evidence="1">
    <location>
        <begin position="62"/>
        <end position="66"/>
    </location>
    <ligand>
        <name>FMN</name>
        <dbReference type="ChEBI" id="CHEBI:58210"/>
    </ligand>
</feature>
<feature type="binding site" evidence="1">
    <location>
        <position position="66"/>
    </location>
    <ligand>
        <name>substrate</name>
    </ligand>
</feature>
<feature type="binding site" evidence="1">
    <location>
        <position position="86"/>
    </location>
    <ligand>
        <name>FMN</name>
        <dbReference type="ChEBI" id="CHEBI:58210"/>
    </ligand>
</feature>
<feature type="binding site" evidence="1">
    <location>
        <begin position="111"/>
        <end position="115"/>
    </location>
    <ligand>
        <name>substrate</name>
    </ligand>
</feature>
<feature type="binding site" evidence="1">
    <location>
        <position position="139"/>
    </location>
    <ligand>
        <name>FMN</name>
        <dbReference type="ChEBI" id="CHEBI:58210"/>
    </ligand>
</feature>
<feature type="binding site" evidence="1">
    <location>
        <position position="172"/>
    </location>
    <ligand>
        <name>FMN</name>
        <dbReference type="ChEBI" id="CHEBI:58210"/>
    </ligand>
</feature>
<feature type="binding site" evidence="1">
    <location>
        <position position="172"/>
    </location>
    <ligand>
        <name>substrate</name>
    </ligand>
</feature>
<feature type="binding site" evidence="1">
    <location>
        <position position="177"/>
    </location>
    <ligand>
        <name>substrate</name>
    </ligand>
</feature>
<feature type="binding site" evidence="1">
    <location>
        <position position="217"/>
    </location>
    <ligand>
        <name>FMN</name>
        <dbReference type="ChEBI" id="CHEBI:58210"/>
    </ligand>
</feature>
<feature type="binding site" evidence="1">
    <location>
        <position position="245"/>
    </location>
    <ligand>
        <name>FMN</name>
        <dbReference type="ChEBI" id="CHEBI:58210"/>
    </ligand>
</feature>
<feature type="binding site" evidence="1">
    <location>
        <begin position="246"/>
        <end position="247"/>
    </location>
    <ligand>
        <name>substrate</name>
    </ligand>
</feature>
<feature type="binding site" evidence="1">
    <location>
        <position position="268"/>
    </location>
    <ligand>
        <name>FMN</name>
        <dbReference type="ChEBI" id="CHEBI:58210"/>
    </ligand>
</feature>
<feature type="binding site" evidence="1">
    <location>
        <position position="297"/>
    </location>
    <ligand>
        <name>FMN</name>
        <dbReference type="ChEBI" id="CHEBI:58210"/>
    </ligand>
</feature>
<feature type="binding site" evidence="1">
    <location>
        <begin position="318"/>
        <end position="319"/>
    </location>
    <ligand>
        <name>FMN</name>
        <dbReference type="ChEBI" id="CHEBI:58210"/>
    </ligand>
</feature>
<accession>B7LNV5</accession>
<organism>
    <name type="scientific">Escherichia fergusonii (strain ATCC 35469 / DSM 13698 / CCUG 18766 / IAM 14443 / JCM 21226 / LMG 7866 / NBRC 102419 / NCTC 12128 / CDC 0568-73)</name>
    <dbReference type="NCBI Taxonomy" id="585054"/>
    <lineage>
        <taxon>Bacteria</taxon>
        <taxon>Pseudomonadati</taxon>
        <taxon>Pseudomonadota</taxon>
        <taxon>Gammaproteobacteria</taxon>
        <taxon>Enterobacterales</taxon>
        <taxon>Enterobacteriaceae</taxon>
        <taxon>Escherichia</taxon>
    </lineage>
</organism>
<name>PYRD_ESCF3</name>
<keyword id="KW-1003">Cell membrane</keyword>
<keyword id="KW-0285">Flavoprotein</keyword>
<keyword id="KW-0288">FMN</keyword>
<keyword id="KW-0472">Membrane</keyword>
<keyword id="KW-0560">Oxidoreductase</keyword>
<keyword id="KW-0665">Pyrimidine biosynthesis</keyword>
<comment type="function">
    <text evidence="1">Catalyzes the conversion of dihydroorotate to orotate with quinone as electron acceptor.</text>
</comment>
<comment type="catalytic activity">
    <reaction evidence="1">
        <text>(S)-dihydroorotate + a quinone = orotate + a quinol</text>
        <dbReference type="Rhea" id="RHEA:30187"/>
        <dbReference type="ChEBI" id="CHEBI:24646"/>
        <dbReference type="ChEBI" id="CHEBI:30839"/>
        <dbReference type="ChEBI" id="CHEBI:30864"/>
        <dbReference type="ChEBI" id="CHEBI:132124"/>
        <dbReference type="EC" id="1.3.5.2"/>
    </reaction>
</comment>
<comment type="cofactor">
    <cofactor evidence="1">
        <name>FMN</name>
        <dbReference type="ChEBI" id="CHEBI:58210"/>
    </cofactor>
    <text evidence="1">Binds 1 FMN per subunit.</text>
</comment>
<comment type="pathway">
    <text evidence="1">Pyrimidine metabolism; UMP biosynthesis via de novo pathway; orotate from (S)-dihydroorotate (quinone route): step 1/1.</text>
</comment>
<comment type="subunit">
    <text evidence="1">Monomer.</text>
</comment>
<comment type="subcellular location">
    <subcellularLocation>
        <location evidence="1">Cell membrane</location>
        <topology evidence="1">Peripheral membrane protein</topology>
    </subcellularLocation>
</comment>
<comment type="similarity">
    <text evidence="1">Belongs to the dihydroorotate dehydrogenase family. Type 2 subfamily.</text>
</comment>
<sequence length="336" mass="36836">MYYPFVRKALFQLDPERAHEFTFQQLRRITGTPFEALVRQKVPVKPVSCMGLTFKNPLGLAAGLDKDGECIDALGAMGFGSIEIGTVTPRPQPGNDKPRLFRLVDAEGLINRMGFNNLGVDNLIENVKKAHYDGVLGINIGKNKDTPVEQGKDDYLICMDKIYPYAGYIAINISSPNTPGLRTLQYGEALDDLLIAIKNKQNDLQKIHQKYVPIAVKIAPDLSEEELIQVADSLVRHNIDGVIATNTTLDRSLVQGMKNCDQTGGLSGRPLQLKSTEIIRRLSQELNGRLPIIGVGGIDSVIAAREKIAAGATLVQIYSGFIFKGPPLIKEIVSNI</sequence>
<reference key="1">
    <citation type="journal article" date="2009" name="PLoS Genet.">
        <title>Organised genome dynamics in the Escherichia coli species results in highly diverse adaptive paths.</title>
        <authorList>
            <person name="Touchon M."/>
            <person name="Hoede C."/>
            <person name="Tenaillon O."/>
            <person name="Barbe V."/>
            <person name="Baeriswyl S."/>
            <person name="Bidet P."/>
            <person name="Bingen E."/>
            <person name="Bonacorsi S."/>
            <person name="Bouchier C."/>
            <person name="Bouvet O."/>
            <person name="Calteau A."/>
            <person name="Chiapello H."/>
            <person name="Clermont O."/>
            <person name="Cruveiller S."/>
            <person name="Danchin A."/>
            <person name="Diard M."/>
            <person name="Dossat C."/>
            <person name="Karoui M.E."/>
            <person name="Frapy E."/>
            <person name="Garry L."/>
            <person name="Ghigo J.M."/>
            <person name="Gilles A.M."/>
            <person name="Johnson J."/>
            <person name="Le Bouguenec C."/>
            <person name="Lescat M."/>
            <person name="Mangenot S."/>
            <person name="Martinez-Jehanne V."/>
            <person name="Matic I."/>
            <person name="Nassif X."/>
            <person name="Oztas S."/>
            <person name="Petit M.A."/>
            <person name="Pichon C."/>
            <person name="Rouy Z."/>
            <person name="Ruf C.S."/>
            <person name="Schneider D."/>
            <person name="Tourret J."/>
            <person name="Vacherie B."/>
            <person name="Vallenet D."/>
            <person name="Medigue C."/>
            <person name="Rocha E.P.C."/>
            <person name="Denamur E."/>
        </authorList>
    </citation>
    <scope>NUCLEOTIDE SEQUENCE [LARGE SCALE GENOMIC DNA]</scope>
    <source>
        <strain>ATCC 35469 / DSM 13698 / BCRC 15582 / CCUG 18766 / IAM 14443 / JCM 21226 / LMG 7866 / NBRC 102419 / NCTC 12128 / CDC 0568-73</strain>
    </source>
</reference>
<proteinExistence type="inferred from homology"/>
<protein>
    <recommendedName>
        <fullName evidence="1">Dihydroorotate dehydrogenase (quinone)</fullName>
        <ecNumber evidence="1">1.3.5.2</ecNumber>
    </recommendedName>
    <alternativeName>
        <fullName evidence="1">DHOdehase</fullName>
        <shortName evidence="1">DHOD</shortName>
        <shortName evidence="1">DHODase</shortName>
    </alternativeName>
    <alternativeName>
        <fullName evidence="1">Dihydroorotate oxidase</fullName>
    </alternativeName>
</protein>
<gene>
    <name evidence="1" type="primary">pyrD</name>
    <name type="ordered locus">EFER_1082</name>
</gene>